<sequence>MAFTPSSPPSPAADASQRPSRYPGEDTTPTSRREILGWYAYGIAAEVFAVCGVGSFLPLTLEQLARERGVLKSSHLPCVGPDAPTSSLANGTAPALLRRDGADNDQCVVGLLGLEINTASFAMYTFSLAVLVQALTLISFSALADYENNRKTLLLAFGFIGSATSMLFVFVAPPVFTFGAILVIIGVTCLGSSFVVLNSFLPVLVANDPSIQGASKEADEELHTLNENGQFEPRDSFSERNPEFESQYTPGIGLGSKPSTNATSPELQLSTRISSKGVGLGYCAAVLVQILSIGLLFALSKTSLPKVSGTLPLRFVLLLVGIWWFSFTMVTRRWLRNRPGPPLSTTTTGGHTNKWRVWLRLVGFAWKSLWKTVKIAVQLREVRVFLVAWFLLSDAIATVSGTAILFARTELKMSTTLVGCLSITATLSGMTGAFLWPVVSRRFKLKSSHTIMLCIALFEIIPLYGMLAYIPLFKKWGVIGLQQPWEIFPLAIVHGIVSGGLSSYCRSFFGLLIPPGSEAAFYALYAATDKGSSVIGPAIVGMLIDATGQVRSGFFFIAILIVLPIPLVWMVNAEKGRMEGVAMAERMAKGQESETGEPGEEAEGLLARGA</sequence>
<gene>
    <name type="primary">atg22-1</name>
    <name type="ORF">ATEG_07889</name>
</gene>
<proteinExistence type="inferred from homology"/>
<keyword id="KW-0029">Amino-acid transport</keyword>
<keyword id="KW-0072">Autophagy</keyword>
<keyword id="KW-0325">Glycoprotein</keyword>
<keyword id="KW-0472">Membrane</keyword>
<keyword id="KW-1185">Reference proteome</keyword>
<keyword id="KW-0812">Transmembrane</keyword>
<keyword id="KW-1133">Transmembrane helix</keyword>
<keyword id="KW-0813">Transport</keyword>
<keyword id="KW-0926">Vacuole</keyword>
<reference key="1">
    <citation type="submission" date="2005-09" db="EMBL/GenBank/DDBJ databases">
        <title>Annotation of the Aspergillus terreus NIH2624 genome.</title>
        <authorList>
            <person name="Birren B.W."/>
            <person name="Lander E.S."/>
            <person name="Galagan J.E."/>
            <person name="Nusbaum C."/>
            <person name="Devon K."/>
            <person name="Henn M."/>
            <person name="Ma L.-J."/>
            <person name="Jaffe D.B."/>
            <person name="Butler J."/>
            <person name="Alvarez P."/>
            <person name="Gnerre S."/>
            <person name="Grabherr M."/>
            <person name="Kleber M."/>
            <person name="Mauceli E.W."/>
            <person name="Brockman W."/>
            <person name="Rounsley S."/>
            <person name="Young S.K."/>
            <person name="LaButti K."/>
            <person name="Pushparaj V."/>
            <person name="DeCaprio D."/>
            <person name="Crawford M."/>
            <person name="Koehrsen M."/>
            <person name="Engels R."/>
            <person name="Montgomery P."/>
            <person name="Pearson M."/>
            <person name="Howarth C."/>
            <person name="Larson L."/>
            <person name="Luoma S."/>
            <person name="White J."/>
            <person name="Alvarado L."/>
            <person name="Kodira C.D."/>
            <person name="Zeng Q."/>
            <person name="Oleary S."/>
            <person name="Yandava C."/>
            <person name="Denning D.W."/>
            <person name="Nierman W.C."/>
            <person name="Milne T."/>
            <person name="Madden K."/>
        </authorList>
    </citation>
    <scope>NUCLEOTIDE SEQUENCE [LARGE SCALE GENOMIC DNA]</scope>
    <source>
        <strain>NIH 2624 / FGSC A1156</strain>
    </source>
</reference>
<comment type="function">
    <text evidence="1">Vacuolar effluxer which mediate the efflux of amino acids resulting from autophagic degradation. The release of autophagic amino acids allows the maintenance of protein synthesis and viability during nitrogen starvation (By similarity).</text>
</comment>
<comment type="subcellular location">
    <subcellularLocation>
        <location evidence="1">Vacuole membrane</location>
        <topology evidence="1">Multi-pass membrane protein</topology>
    </subcellularLocation>
    <text evidence="1">Vacuole and punctate structures.</text>
</comment>
<comment type="similarity">
    <text evidence="4">Belongs to the ATG22 family.</text>
</comment>
<comment type="sequence caution" evidence="4">
    <conflict type="erroneous gene model prediction">
        <sequence resource="EMBL-CDS" id="EAU32151"/>
    </conflict>
</comment>
<name>AT221_ASPTN</name>
<protein>
    <recommendedName>
        <fullName>Autophagy-related protein 22-1</fullName>
    </recommendedName>
</protein>
<dbReference type="EMBL" id="CH476604">
    <property type="protein sequence ID" value="EAU32151.1"/>
    <property type="status" value="ALT_SEQ"/>
    <property type="molecule type" value="Genomic_DNA"/>
</dbReference>
<dbReference type="RefSeq" id="XP_001216510.1">
    <property type="nucleotide sequence ID" value="XM_001216510.1"/>
</dbReference>
<dbReference type="STRING" id="341663.Q0CEJ5"/>
<dbReference type="GlyCosmos" id="Q0CEJ5">
    <property type="glycosylation" value="2 sites, No reported glycans"/>
</dbReference>
<dbReference type="EnsemblFungi" id="EAU32151">
    <property type="protein sequence ID" value="EAU32151"/>
    <property type="gene ID" value="ATEG_07889"/>
</dbReference>
<dbReference type="GeneID" id="4322719"/>
<dbReference type="eggNOG" id="ENOG502QVD3">
    <property type="taxonomic scope" value="Eukaryota"/>
</dbReference>
<dbReference type="OrthoDB" id="192733at2759"/>
<dbReference type="Proteomes" id="UP000007963">
    <property type="component" value="Unassembled WGS sequence"/>
</dbReference>
<dbReference type="GO" id="GO:0005774">
    <property type="term" value="C:vacuolar membrane"/>
    <property type="evidence" value="ECO:0007669"/>
    <property type="project" value="UniProtKB-SubCell"/>
</dbReference>
<dbReference type="GO" id="GO:0032974">
    <property type="term" value="P:amino acid transmembrane export from vacuole"/>
    <property type="evidence" value="ECO:0007669"/>
    <property type="project" value="InterPro"/>
</dbReference>
<dbReference type="GO" id="GO:0006914">
    <property type="term" value="P:autophagy"/>
    <property type="evidence" value="ECO:0007669"/>
    <property type="project" value="UniProtKB-KW"/>
</dbReference>
<dbReference type="CDD" id="cd17483">
    <property type="entry name" value="MFS_Atg22_like"/>
    <property type="match status" value="1"/>
</dbReference>
<dbReference type="Gene3D" id="1.20.1250.20">
    <property type="entry name" value="MFS general substrate transporter like domains"/>
    <property type="match status" value="1"/>
</dbReference>
<dbReference type="InterPro" id="IPR044738">
    <property type="entry name" value="Atg22"/>
</dbReference>
<dbReference type="InterPro" id="IPR024671">
    <property type="entry name" value="Atg22-like"/>
</dbReference>
<dbReference type="InterPro" id="IPR050495">
    <property type="entry name" value="ATG22/LtaA_families"/>
</dbReference>
<dbReference type="InterPro" id="IPR036259">
    <property type="entry name" value="MFS_trans_sf"/>
</dbReference>
<dbReference type="PANTHER" id="PTHR23519">
    <property type="entry name" value="AUTOPHAGY-RELATED PROTEIN 22"/>
    <property type="match status" value="1"/>
</dbReference>
<dbReference type="PANTHER" id="PTHR23519:SF3">
    <property type="entry name" value="AUTOPHAGY-RELATED PROTEIN 22-2"/>
    <property type="match status" value="1"/>
</dbReference>
<dbReference type="Pfam" id="PF11700">
    <property type="entry name" value="ATG22"/>
    <property type="match status" value="1"/>
</dbReference>
<dbReference type="SUPFAM" id="SSF103473">
    <property type="entry name" value="MFS general substrate transporter"/>
    <property type="match status" value="2"/>
</dbReference>
<organism>
    <name type="scientific">Aspergillus terreus (strain NIH 2624 / FGSC A1156)</name>
    <dbReference type="NCBI Taxonomy" id="341663"/>
    <lineage>
        <taxon>Eukaryota</taxon>
        <taxon>Fungi</taxon>
        <taxon>Dikarya</taxon>
        <taxon>Ascomycota</taxon>
        <taxon>Pezizomycotina</taxon>
        <taxon>Eurotiomycetes</taxon>
        <taxon>Eurotiomycetidae</taxon>
        <taxon>Eurotiales</taxon>
        <taxon>Aspergillaceae</taxon>
        <taxon>Aspergillus</taxon>
        <taxon>Aspergillus subgen. Circumdati</taxon>
    </lineage>
</organism>
<evidence type="ECO:0000250" key="1"/>
<evidence type="ECO:0000255" key="2"/>
<evidence type="ECO:0000256" key="3">
    <source>
        <dbReference type="SAM" id="MobiDB-lite"/>
    </source>
</evidence>
<evidence type="ECO:0000305" key="4"/>
<accession>Q0CEJ5</accession>
<feature type="chain" id="PRO_0000318020" description="Autophagy-related protein 22-1">
    <location>
        <begin position="1"/>
        <end position="610"/>
    </location>
</feature>
<feature type="transmembrane region" description="Helical" evidence="2">
    <location>
        <begin position="35"/>
        <end position="55"/>
    </location>
</feature>
<feature type="transmembrane region" description="Helical" evidence="2">
    <location>
        <begin position="120"/>
        <end position="140"/>
    </location>
</feature>
<feature type="transmembrane region" description="Helical" evidence="2">
    <location>
        <begin position="152"/>
        <end position="171"/>
    </location>
</feature>
<feature type="transmembrane region" description="Helical" evidence="2">
    <location>
        <begin position="189"/>
        <end position="209"/>
    </location>
</feature>
<feature type="transmembrane region" description="Helical" evidence="2">
    <location>
        <begin position="278"/>
        <end position="298"/>
    </location>
</feature>
<feature type="transmembrane region" description="Helical" evidence="2">
    <location>
        <begin position="310"/>
        <end position="330"/>
    </location>
</feature>
<feature type="transmembrane region" description="Helical" evidence="2">
    <location>
        <begin position="384"/>
        <end position="404"/>
    </location>
</feature>
<feature type="transmembrane region" description="Helical" evidence="2">
    <location>
        <begin position="418"/>
        <end position="438"/>
    </location>
</feature>
<feature type="transmembrane region" description="Helical" evidence="2">
    <location>
        <begin position="453"/>
        <end position="473"/>
    </location>
</feature>
<feature type="transmembrane region" description="Helical" evidence="2">
    <location>
        <begin position="488"/>
        <end position="510"/>
    </location>
</feature>
<feature type="transmembrane region" description="Helical" evidence="2">
    <location>
        <begin position="522"/>
        <end position="544"/>
    </location>
</feature>
<feature type="transmembrane region" description="Helical" evidence="2">
    <location>
        <begin position="553"/>
        <end position="573"/>
    </location>
</feature>
<feature type="region of interest" description="Disordered" evidence="3">
    <location>
        <begin position="1"/>
        <end position="29"/>
    </location>
</feature>
<feature type="region of interest" description="Disordered" evidence="3">
    <location>
        <begin position="229"/>
        <end position="265"/>
    </location>
</feature>
<feature type="region of interest" description="Disordered" evidence="3">
    <location>
        <begin position="588"/>
        <end position="610"/>
    </location>
</feature>
<feature type="compositionally biased region" description="Pro residues" evidence="3">
    <location>
        <begin position="1"/>
        <end position="11"/>
    </location>
</feature>
<feature type="compositionally biased region" description="Basic and acidic residues" evidence="3">
    <location>
        <begin position="232"/>
        <end position="243"/>
    </location>
</feature>
<feature type="compositionally biased region" description="Acidic residues" evidence="3">
    <location>
        <begin position="594"/>
        <end position="603"/>
    </location>
</feature>
<feature type="glycosylation site" description="N-linked (GlcNAc...) asparagine" evidence="2">
    <location>
        <position position="90"/>
    </location>
</feature>
<feature type="glycosylation site" description="N-linked (GlcNAc...) asparagine" evidence="2">
    <location>
        <position position="261"/>
    </location>
</feature>